<gene>
    <name evidence="1" type="primary">rpsR</name>
    <name type="ordered locus">MCA2037</name>
</gene>
<name>RS18_METCA</name>
<dbReference type="EMBL" id="AE017282">
    <property type="protein sequence ID" value="AAU91711.1"/>
    <property type="molecule type" value="Genomic_DNA"/>
</dbReference>
<dbReference type="RefSeq" id="WP_010961282.1">
    <property type="nucleotide sequence ID" value="NC_002977.6"/>
</dbReference>
<dbReference type="SMR" id="Q606H9"/>
<dbReference type="STRING" id="243233.MCA2037"/>
<dbReference type="GeneID" id="88224263"/>
<dbReference type="KEGG" id="mca:MCA2037"/>
<dbReference type="eggNOG" id="COG0238">
    <property type="taxonomic scope" value="Bacteria"/>
</dbReference>
<dbReference type="HOGENOM" id="CLU_148710_2_2_6"/>
<dbReference type="Proteomes" id="UP000006821">
    <property type="component" value="Chromosome"/>
</dbReference>
<dbReference type="GO" id="GO:0022627">
    <property type="term" value="C:cytosolic small ribosomal subunit"/>
    <property type="evidence" value="ECO:0007669"/>
    <property type="project" value="TreeGrafter"/>
</dbReference>
<dbReference type="GO" id="GO:0070181">
    <property type="term" value="F:small ribosomal subunit rRNA binding"/>
    <property type="evidence" value="ECO:0007669"/>
    <property type="project" value="TreeGrafter"/>
</dbReference>
<dbReference type="GO" id="GO:0003735">
    <property type="term" value="F:structural constituent of ribosome"/>
    <property type="evidence" value="ECO:0007669"/>
    <property type="project" value="InterPro"/>
</dbReference>
<dbReference type="GO" id="GO:0006412">
    <property type="term" value="P:translation"/>
    <property type="evidence" value="ECO:0007669"/>
    <property type="project" value="UniProtKB-UniRule"/>
</dbReference>
<dbReference type="FunFam" id="4.10.640.10:FF:000001">
    <property type="entry name" value="30S ribosomal protein S18"/>
    <property type="match status" value="1"/>
</dbReference>
<dbReference type="Gene3D" id="4.10.640.10">
    <property type="entry name" value="Ribosomal protein S18"/>
    <property type="match status" value="1"/>
</dbReference>
<dbReference type="HAMAP" id="MF_00270">
    <property type="entry name" value="Ribosomal_bS18"/>
    <property type="match status" value="1"/>
</dbReference>
<dbReference type="InterPro" id="IPR001648">
    <property type="entry name" value="Ribosomal_bS18"/>
</dbReference>
<dbReference type="InterPro" id="IPR018275">
    <property type="entry name" value="Ribosomal_bS18_CS"/>
</dbReference>
<dbReference type="InterPro" id="IPR036870">
    <property type="entry name" value="Ribosomal_bS18_sf"/>
</dbReference>
<dbReference type="NCBIfam" id="TIGR00165">
    <property type="entry name" value="S18"/>
    <property type="match status" value="1"/>
</dbReference>
<dbReference type="PANTHER" id="PTHR13479">
    <property type="entry name" value="30S RIBOSOMAL PROTEIN S18"/>
    <property type="match status" value="1"/>
</dbReference>
<dbReference type="PANTHER" id="PTHR13479:SF40">
    <property type="entry name" value="SMALL RIBOSOMAL SUBUNIT PROTEIN BS18M"/>
    <property type="match status" value="1"/>
</dbReference>
<dbReference type="Pfam" id="PF01084">
    <property type="entry name" value="Ribosomal_S18"/>
    <property type="match status" value="1"/>
</dbReference>
<dbReference type="PRINTS" id="PR00974">
    <property type="entry name" value="RIBOSOMALS18"/>
</dbReference>
<dbReference type="SUPFAM" id="SSF46911">
    <property type="entry name" value="Ribosomal protein S18"/>
    <property type="match status" value="1"/>
</dbReference>
<dbReference type="PROSITE" id="PS00057">
    <property type="entry name" value="RIBOSOMAL_S18"/>
    <property type="match status" value="1"/>
</dbReference>
<reference key="1">
    <citation type="journal article" date="2004" name="PLoS Biol.">
        <title>Genomic insights into methanotrophy: the complete genome sequence of Methylococcus capsulatus (Bath).</title>
        <authorList>
            <person name="Ward N.L."/>
            <person name="Larsen O."/>
            <person name="Sakwa J."/>
            <person name="Bruseth L."/>
            <person name="Khouri H.M."/>
            <person name="Durkin A.S."/>
            <person name="Dimitrov G."/>
            <person name="Jiang L."/>
            <person name="Scanlan D."/>
            <person name="Kang K.H."/>
            <person name="Lewis M.R."/>
            <person name="Nelson K.E."/>
            <person name="Methe B.A."/>
            <person name="Wu M."/>
            <person name="Heidelberg J.F."/>
            <person name="Paulsen I.T."/>
            <person name="Fouts D.E."/>
            <person name="Ravel J."/>
            <person name="Tettelin H."/>
            <person name="Ren Q."/>
            <person name="Read T.D."/>
            <person name="DeBoy R.T."/>
            <person name="Seshadri R."/>
            <person name="Salzberg S.L."/>
            <person name="Jensen H.B."/>
            <person name="Birkeland N.K."/>
            <person name="Nelson W.C."/>
            <person name="Dodson R.J."/>
            <person name="Grindhaug S.H."/>
            <person name="Holt I.E."/>
            <person name="Eidhammer I."/>
            <person name="Jonasen I."/>
            <person name="Vanaken S."/>
            <person name="Utterback T.R."/>
            <person name="Feldblyum T.V."/>
            <person name="Fraser C.M."/>
            <person name="Lillehaug J.R."/>
            <person name="Eisen J.A."/>
        </authorList>
    </citation>
    <scope>NUCLEOTIDE SEQUENCE [LARGE SCALE GENOMIC DNA]</scope>
    <source>
        <strain>ATCC 33009 / NCIMB 11132 / Bath</strain>
    </source>
</reference>
<comment type="function">
    <text evidence="1">Binds as a heterodimer with protein bS6 to the central domain of the 16S rRNA, where it helps stabilize the platform of the 30S subunit.</text>
</comment>
<comment type="subunit">
    <text evidence="1">Part of the 30S ribosomal subunit. Forms a tight heterodimer with protein bS6.</text>
</comment>
<comment type="similarity">
    <text evidence="1">Belongs to the bacterial ribosomal protein bS18 family.</text>
</comment>
<proteinExistence type="inferred from homology"/>
<evidence type="ECO:0000255" key="1">
    <source>
        <dbReference type="HAMAP-Rule" id="MF_00270"/>
    </source>
</evidence>
<evidence type="ECO:0000305" key="2"/>
<feature type="chain" id="PRO_0000111176" description="Small ribosomal subunit protein bS18">
    <location>
        <begin position="1"/>
        <end position="76"/>
    </location>
</feature>
<organism>
    <name type="scientific">Methylococcus capsulatus (strain ATCC 33009 / NCIMB 11132 / Bath)</name>
    <dbReference type="NCBI Taxonomy" id="243233"/>
    <lineage>
        <taxon>Bacteria</taxon>
        <taxon>Pseudomonadati</taxon>
        <taxon>Pseudomonadota</taxon>
        <taxon>Gammaproteobacteria</taxon>
        <taxon>Methylococcales</taxon>
        <taxon>Methylococcaceae</taxon>
        <taxon>Methylococcus</taxon>
    </lineage>
</organism>
<keyword id="KW-1185">Reference proteome</keyword>
<keyword id="KW-0687">Ribonucleoprotein</keyword>
<keyword id="KW-0689">Ribosomal protein</keyword>
<keyword id="KW-0694">RNA-binding</keyword>
<keyword id="KW-0699">rRNA-binding</keyword>
<accession>Q606H9</accession>
<sequence>MVRQFKRRRYCRFTAEDVKEIDYKDLDTLREYVSETGKIVPSRITGTSAKYQRQLATAIKRARFLALLPFCDAHEQ</sequence>
<protein>
    <recommendedName>
        <fullName evidence="1">Small ribosomal subunit protein bS18</fullName>
    </recommendedName>
    <alternativeName>
        <fullName evidence="2">30S ribosomal protein S18</fullName>
    </alternativeName>
</protein>